<comment type="function">
    <text evidence="1">Catalyzes the reversible transfer of the terminal phosphate group between ATP and AMP. Plays an important role in cellular energy homeostasis and in adenine nucleotide metabolism.</text>
</comment>
<comment type="catalytic activity">
    <reaction evidence="1">
        <text>AMP + ATP = 2 ADP</text>
        <dbReference type="Rhea" id="RHEA:12973"/>
        <dbReference type="ChEBI" id="CHEBI:30616"/>
        <dbReference type="ChEBI" id="CHEBI:456215"/>
        <dbReference type="ChEBI" id="CHEBI:456216"/>
        <dbReference type="EC" id="2.7.4.3"/>
    </reaction>
</comment>
<comment type="pathway">
    <text evidence="1">Purine metabolism; AMP biosynthesis via salvage pathway; AMP from ADP: step 1/1.</text>
</comment>
<comment type="subunit">
    <text evidence="1">Monomer.</text>
</comment>
<comment type="subcellular location">
    <subcellularLocation>
        <location evidence="1">Cytoplasm</location>
    </subcellularLocation>
</comment>
<comment type="domain">
    <text evidence="1">Consists of three domains, a large central CORE domain and two small peripheral domains, NMPbind and LID, which undergo movements during catalysis. The LID domain closes over the site of phosphoryl transfer upon ATP binding. Assembling and dissambling the active center during each catalytic cycle provides an effective means to prevent ATP hydrolysis.</text>
</comment>
<comment type="similarity">
    <text evidence="1">Belongs to the adenylate kinase family.</text>
</comment>
<name>KAD_CAMJJ</name>
<protein>
    <recommendedName>
        <fullName evidence="1">Adenylate kinase</fullName>
        <shortName evidence="1">AK</shortName>
        <ecNumber evidence="1">2.7.4.3</ecNumber>
    </recommendedName>
    <alternativeName>
        <fullName evidence="1">ATP-AMP transphosphorylase</fullName>
    </alternativeName>
    <alternativeName>
        <fullName evidence="1">ATP:AMP phosphotransferase</fullName>
    </alternativeName>
    <alternativeName>
        <fullName evidence="1">Adenylate monophosphate kinase</fullName>
    </alternativeName>
</protein>
<feature type="chain" id="PRO_1000058812" description="Adenylate kinase">
    <location>
        <begin position="1"/>
        <end position="192"/>
    </location>
</feature>
<feature type="region of interest" description="NMP" evidence="1">
    <location>
        <begin position="34"/>
        <end position="63"/>
    </location>
</feature>
<feature type="region of interest" description="LID" evidence="1">
    <location>
        <begin position="130"/>
        <end position="136"/>
    </location>
</feature>
<feature type="binding site" evidence="1">
    <location>
        <begin position="12"/>
        <end position="17"/>
    </location>
    <ligand>
        <name>ATP</name>
        <dbReference type="ChEBI" id="CHEBI:30616"/>
    </ligand>
</feature>
<feature type="binding site" evidence="1">
    <location>
        <position position="35"/>
    </location>
    <ligand>
        <name>AMP</name>
        <dbReference type="ChEBI" id="CHEBI:456215"/>
    </ligand>
</feature>
<feature type="binding site" evidence="1">
    <location>
        <position position="40"/>
    </location>
    <ligand>
        <name>AMP</name>
        <dbReference type="ChEBI" id="CHEBI:456215"/>
    </ligand>
</feature>
<feature type="binding site" evidence="1">
    <location>
        <begin position="61"/>
        <end position="63"/>
    </location>
    <ligand>
        <name>AMP</name>
        <dbReference type="ChEBI" id="CHEBI:456215"/>
    </ligand>
</feature>
<feature type="binding site" evidence="1">
    <location>
        <begin position="88"/>
        <end position="91"/>
    </location>
    <ligand>
        <name>AMP</name>
        <dbReference type="ChEBI" id="CHEBI:456215"/>
    </ligand>
</feature>
<feature type="binding site" evidence="1">
    <location>
        <position position="95"/>
    </location>
    <ligand>
        <name>AMP</name>
        <dbReference type="ChEBI" id="CHEBI:456215"/>
    </ligand>
</feature>
<feature type="binding site" evidence="1">
    <location>
        <position position="131"/>
    </location>
    <ligand>
        <name>ATP</name>
        <dbReference type="ChEBI" id="CHEBI:30616"/>
    </ligand>
</feature>
<feature type="binding site" evidence="1">
    <location>
        <position position="133"/>
    </location>
    <ligand>
        <name>AMP</name>
        <dbReference type="ChEBI" id="CHEBI:456215"/>
    </ligand>
</feature>
<feature type="binding site" evidence="1">
    <location>
        <position position="145"/>
    </location>
    <ligand>
        <name>AMP</name>
        <dbReference type="ChEBI" id="CHEBI:456215"/>
    </ligand>
</feature>
<feature type="binding site" evidence="1">
    <location>
        <position position="173"/>
    </location>
    <ligand>
        <name>ATP</name>
        <dbReference type="ChEBI" id="CHEBI:30616"/>
    </ligand>
</feature>
<accession>A1VYZ9</accession>
<reference key="1">
    <citation type="submission" date="2006-12" db="EMBL/GenBank/DDBJ databases">
        <authorList>
            <person name="Fouts D.E."/>
            <person name="Nelson K.E."/>
            <person name="Sebastian Y."/>
        </authorList>
    </citation>
    <scope>NUCLEOTIDE SEQUENCE [LARGE SCALE GENOMIC DNA]</scope>
    <source>
        <strain>81-176</strain>
    </source>
</reference>
<dbReference type="EC" id="2.7.4.3" evidence="1"/>
<dbReference type="EMBL" id="CP000538">
    <property type="protein sequence ID" value="EAQ73369.1"/>
    <property type="molecule type" value="Genomic_DNA"/>
</dbReference>
<dbReference type="RefSeq" id="WP_002855137.1">
    <property type="nucleotide sequence ID" value="NC_008787.1"/>
</dbReference>
<dbReference type="SMR" id="A1VYZ9"/>
<dbReference type="KEGG" id="cjj:CJJ81176_0667"/>
<dbReference type="eggNOG" id="COG0563">
    <property type="taxonomic scope" value="Bacteria"/>
</dbReference>
<dbReference type="HOGENOM" id="CLU_032354_4_1_7"/>
<dbReference type="UniPathway" id="UPA00588">
    <property type="reaction ID" value="UER00649"/>
</dbReference>
<dbReference type="Proteomes" id="UP000000646">
    <property type="component" value="Chromosome"/>
</dbReference>
<dbReference type="GO" id="GO:0005737">
    <property type="term" value="C:cytoplasm"/>
    <property type="evidence" value="ECO:0007669"/>
    <property type="project" value="UniProtKB-SubCell"/>
</dbReference>
<dbReference type="GO" id="GO:0004017">
    <property type="term" value="F:adenylate kinase activity"/>
    <property type="evidence" value="ECO:0007669"/>
    <property type="project" value="UniProtKB-UniRule"/>
</dbReference>
<dbReference type="GO" id="GO:0005524">
    <property type="term" value="F:ATP binding"/>
    <property type="evidence" value="ECO:0007669"/>
    <property type="project" value="UniProtKB-UniRule"/>
</dbReference>
<dbReference type="GO" id="GO:0044209">
    <property type="term" value="P:AMP salvage"/>
    <property type="evidence" value="ECO:0007669"/>
    <property type="project" value="UniProtKB-UniRule"/>
</dbReference>
<dbReference type="CDD" id="cd01428">
    <property type="entry name" value="ADK"/>
    <property type="match status" value="1"/>
</dbReference>
<dbReference type="Gene3D" id="3.40.50.300">
    <property type="entry name" value="P-loop containing nucleotide triphosphate hydrolases"/>
    <property type="match status" value="1"/>
</dbReference>
<dbReference type="HAMAP" id="MF_00235">
    <property type="entry name" value="Adenylate_kinase_Adk"/>
    <property type="match status" value="1"/>
</dbReference>
<dbReference type="InterPro" id="IPR000850">
    <property type="entry name" value="Adenylat/UMP-CMP_kin"/>
</dbReference>
<dbReference type="InterPro" id="IPR033690">
    <property type="entry name" value="Adenylat_kinase_CS"/>
</dbReference>
<dbReference type="InterPro" id="IPR027417">
    <property type="entry name" value="P-loop_NTPase"/>
</dbReference>
<dbReference type="NCBIfam" id="NF001384">
    <property type="entry name" value="PRK00279.2-2"/>
    <property type="match status" value="1"/>
</dbReference>
<dbReference type="PANTHER" id="PTHR23359">
    <property type="entry name" value="NUCLEOTIDE KINASE"/>
    <property type="match status" value="1"/>
</dbReference>
<dbReference type="Pfam" id="PF00406">
    <property type="entry name" value="ADK"/>
    <property type="match status" value="1"/>
</dbReference>
<dbReference type="PRINTS" id="PR00094">
    <property type="entry name" value="ADENYLTKNASE"/>
</dbReference>
<dbReference type="SUPFAM" id="SSF52540">
    <property type="entry name" value="P-loop containing nucleoside triphosphate hydrolases"/>
    <property type="match status" value="1"/>
</dbReference>
<dbReference type="PROSITE" id="PS00113">
    <property type="entry name" value="ADENYLATE_KINASE"/>
    <property type="match status" value="1"/>
</dbReference>
<organism>
    <name type="scientific">Campylobacter jejuni subsp. jejuni serotype O:23/36 (strain 81-176)</name>
    <dbReference type="NCBI Taxonomy" id="354242"/>
    <lineage>
        <taxon>Bacteria</taxon>
        <taxon>Pseudomonadati</taxon>
        <taxon>Campylobacterota</taxon>
        <taxon>Epsilonproteobacteria</taxon>
        <taxon>Campylobacterales</taxon>
        <taxon>Campylobacteraceae</taxon>
        <taxon>Campylobacter</taxon>
    </lineage>
</organism>
<sequence length="192" mass="21334">MKELFLIIGAPGSGKTTDASLIAQADATNITHYSTGDLLRAEVASGSELGKTIDSFISKGNLVPLDVVVNTIVCALKAAPTKTIIIDGYPRSVEQMMEFDKVLSEQNEICLKGVIEVRVSEEVAKERVLGRNRGADDNEEVFYNRMKVYTEPLNEILDFYQKKKLHFIIDGERTIEPIVADMKELIKKIQSI</sequence>
<proteinExistence type="inferred from homology"/>
<evidence type="ECO:0000255" key="1">
    <source>
        <dbReference type="HAMAP-Rule" id="MF_00235"/>
    </source>
</evidence>
<gene>
    <name evidence="1" type="primary">adk</name>
    <name type="ordered locus">CJJ81176_0667</name>
</gene>
<keyword id="KW-0067">ATP-binding</keyword>
<keyword id="KW-0963">Cytoplasm</keyword>
<keyword id="KW-0418">Kinase</keyword>
<keyword id="KW-0545">Nucleotide biosynthesis</keyword>
<keyword id="KW-0547">Nucleotide-binding</keyword>
<keyword id="KW-0808">Transferase</keyword>